<comment type="function">
    <text evidence="1 2">Involved in jasmonate (JA) signaling. Required for jasmonate signaling in plant defense responses. Can complement Arabidopsis coi1-1 mutant and restore jasmonate signaling. Required for JA-regulated defense responses to infestation by the leaffolder Cnaphalocrocis medinalis. May act on an initial response of jasmonate-regulated gene expression toward drought tolerance as part of a BHLH148-TIFY11D/JAZ12-COI1A complex (By similarity). Component of SCF(COI1) E3 ubiquitin ligase complexes, which may mediate the ubiquitination and subsequent proteasomal degradation of target proteins, including TIFY/JAZ family (By similarity).</text>
</comment>
<comment type="subunit">
    <text evidence="2">Interacts with TIFY6A/JAZ3, TIFY6B/JAZ4 and TIFY11D/JAZ12 in a coronatine-dependent manner. Interacts with TIFY9/JAZ5, TIFY10A/JAZ6, TIFY10B/JAZ7, TIFY11A/JAZ9 and TIFY11C/JAZ11 in a coronatine-dependent manner.</text>
</comment>
<reference key="1">
    <citation type="journal article" date="2005" name="PLoS Biol.">
        <title>The genomes of Oryza sativa: a history of duplications.</title>
        <authorList>
            <person name="Yu J."/>
            <person name="Wang J."/>
            <person name="Lin W."/>
            <person name="Li S."/>
            <person name="Li H."/>
            <person name="Zhou J."/>
            <person name="Ni P."/>
            <person name="Dong W."/>
            <person name="Hu S."/>
            <person name="Zeng C."/>
            <person name="Zhang J."/>
            <person name="Zhang Y."/>
            <person name="Li R."/>
            <person name="Xu Z."/>
            <person name="Li S."/>
            <person name="Li X."/>
            <person name="Zheng H."/>
            <person name="Cong L."/>
            <person name="Lin L."/>
            <person name="Yin J."/>
            <person name="Geng J."/>
            <person name="Li G."/>
            <person name="Shi J."/>
            <person name="Liu J."/>
            <person name="Lv H."/>
            <person name="Li J."/>
            <person name="Wang J."/>
            <person name="Deng Y."/>
            <person name="Ran L."/>
            <person name="Shi X."/>
            <person name="Wang X."/>
            <person name="Wu Q."/>
            <person name="Li C."/>
            <person name="Ren X."/>
            <person name="Wang J."/>
            <person name="Wang X."/>
            <person name="Li D."/>
            <person name="Liu D."/>
            <person name="Zhang X."/>
            <person name="Ji Z."/>
            <person name="Zhao W."/>
            <person name="Sun Y."/>
            <person name="Zhang Z."/>
            <person name="Bao J."/>
            <person name="Han Y."/>
            <person name="Dong L."/>
            <person name="Ji J."/>
            <person name="Chen P."/>
            <person name="Wu S."/>
            <person name="Liu J."/>
            <person name="Xiao Y."/>
            <person name="Bu D."/>
            <person name="Tan J."/>
            <person name="Yang L."/>
            <person name="Ye C."/>
            <person name="Zhang J."/>
            <person name="Xu J."/>
            <person name="Zhou Y."/>
            <person name="Yu Y."/>
            <person name="Zhang B."/>
            <person name="Zhuang S."/>
            <person name="Wei H."/>
            <person name="Liu B."/>
            <person name="Lei M."/>
            <person name="Yu H."/>
            <person name="Li Y."/>
            <person name="Xu H."/>
            <person name="Wei S."/>
            <person name="He X."/>
            <person name="Fang L."/>
            <person name="Zhang Z."/>
            <person name="Zhang Y."/>
            <person name="Huang X."/>
            <person name="Su Z."/>
            <person name="Tong W."/>
            <person name="Li J."/>
            <person name="Tong Z."/>
            <person name="Li S."/>
            <person name="Ye J."/>
            <person name="Wang L."/>
            <person name="Fang L."/>
            <person name="Lei T."/>
            <person name="Chen C.-S."/>
            <person name="Chen H.-C."/>
            <person name="Xu Z."/>
            <person name="Li H."/>
            <person name="Huang H."/>
            <person name="Zhang F."/>
            <person name="Xu H."/>
            <person name="Li N."/>
            <person name="Zhao C."/>
            <person name="Li S."/>
            <person name="Dong L."/>
            <person name="Huang Y."/>
            <person name="Li L."/>
            <person name="Xi Y."/>
            <person name="Qi Q."/>
            <person name="Li W."/>
            <person name="Zhang B."/>
            <person name="Hu W."/>
            <person name="Zhang Y."/>
            <person name="Tian X."/>
            <person name="Jiao Y."/>
            <person name="Liang X."/>
            <person name="Jin J."/>
            <person name="Gao L."/>
            <person name="Zheng W."/>
            <person name="Hao B."/>
            <person name="Liu S.-M."/>
            <person name="Wang W."/>
            <person name="Yuan L."/>
            <person name="Cao M."/>
            <person name="McDermott J."/>
            <person name="Samudrala R."/>
            <person name="Wang J."/>
            <person name="Wong G.K.-S."/>
            <person name="Yang H."/>
        </authorList>
    </citation>
    <scope>NUCLEOTIDE SEQUENCE [LARGE SCALE GENOMIC DNA]</scope>
    <source>
        <strain>cv. 93-11</strain>
    </source>
</reference>
<keyword id="KW-1184">Jasmonic acid signaling pathway</keyword>
<keyword id="KW-0611">Plant defense</keyword>
<keyword id="KW-1185">Reference proteome</keyword>
<keyword id="KW-0346">Stress response</keyword>
<keyword id="KW-0833">Ubl conjugation pathway</keyword>
<feature type="chain" id="PRO_0000434867" description="Coronatine-insensitive protein homolog 1a">
    <location>
        <begin position="1"/>
        <end position="595"/>
    </location>
</feature>
<feature type="domain" description="F-box" evidence="3">
    <location>
        <begin position="20"/>
        <end position="62"/>
    </location>
</feature>
<feature type="binding site" evidence="1">
    <location>
        <position position="90"/>
    </location>
    <ligand>
        <name>jasmonate</name>
        <dbReference type="ChEBI" id="CHEBI:58431"/>
    </ligand>
</feature>
<feature type="binding site" evidence="1">
    <location>
        <position position="351"/>
    </location>
    <ligand>
        <name>jasmonate</name>
        <dbReference type="ChEBI" id="CHEBI:58431"/>
    </ligand>
</feature>
<feature type="binding site" evidence="1">
    <location>
        <position position="389"/>
    </location>
    <ligand>
        <name>jasmonate</name>
        <dbReference type="ChEBI" id="CHEBI:58431"/>
    </ligand>
</feature>
<feature type="binding site" evidence="1">
    <location>
        <position position="412"/>
    </location>
    <ligand>
        <name>jasmonate</name>
        <dbReference type="ChEBI" id="CHEBI:58431"/>
    </ligand>
</feature>
<feature type="binding site" evidence="1">
    <location>
        <position position="499"/>
    </location>
    <ligand>
        <name>jasmonate</name>
        <dbReference type="ChEBI" id="CHEBI:58431"/>
    </ligand>
</feature>
<name>COI1A_ORYSI</name>
<organism>
    <name type="scientific">Oryza sativa subsp. indica</name>
    <name type="common">Rice</name>
    <dbReference type="NCBI Taxonomy" id="39946"/>
    <lineage>
        <taxon>Eukaryota</taxon>
        <taxon>Viridiplantae</taxon>
        <taxon>Streptophyta</taxon>
        <taxon>Embryophyta</taxon>
        <taxon>Tracheophyta</taxon>
        <taxon>Spermatophyta</taxon>
        <taxon>Magnoliopsida</taxon>
        <taxon>Liliopsida</taxon>
        <taxon>Poales</taxon>
        <taxon>Poaceae</taxon>
        <taxon>BOP clade</taxon>
        <taxon>Oryzoideae</taxon>
        <taxon>Oryzeae</taxon>
        <taxon>Oryzinae</taxon>
        <taxon>Oryza</taxon>
        <taxon>Oryza sativa</taxon>
    </lineage>
</organism>
<sequence>MGGEVPEPRRLNRALSFDDWVPDEALHLVMGHVEDPRDREAASRVCRRWHRIDALTRKHVTVAFCYAARPARLRERFPRLESLSLKGKPRAAMYGLIPDDWGAYAAPWIDELAAPLECLKALHLRRMTVTDADIAALVRARGHMLQELKLDKCIGFSTDALRLVARSCRSLRTLFLEECHITDKGGEWLHELAVNNSVLVTLNFYMTELKVAPADLELLAKNCKSLISLKMSECDLSDLISFFQTANALQDFAGGAFYEVGELTKYEKVKFPPRLCFLGLTYMGTNEMPVIFPFSMKLKKLDLQYTFLTTEDHCQIIAKCPNLLILEVRNVIGDRGLEVVGDTCKKLRRLRIERGDDDPGLQEEQGGVSQLGLTAVAVGCRELEYIAAYVSDITNGALESIGTFCKNLYDFRLVLLDRERQVTDLPLDNGVCALLRNCTKLRRFALYLRPGGLSDDGLSYIGQYSGNIQYMLLGNVGESDHGLIRFAVGCTNLQKLELRSCCFSERALSLAVLQMPSLRYIWVQGYRASQTGLDLLLMARPFWNIEFTPPSPESFNHMTEDGEPCVDSHAQVLAYYSLAGRRSDCPQWVIPLHPA</sequence>
<gene>
    <name evidence="4" type="primary">COI1A</name>
    <name evidence="5" type="ORF">OsI_04468</name>
</gene>
<proteinExistence type="inferred from homology"/>
<accession>A2WX30</accession>
<evidence type="ECO:0000250" key="1">
    <source>
        <dbReference type="UniProtKB" id="O04197"/>
    </source>
</evidence>
<evidence type="ECO:0000250" key="2">
    <source>
        <dbReference type="UniProtKB" id="Q6Y9P5"/>
    </source>
</evidence>
<evidence type="ECO:0000255" key="3"/>
<evidence type="ECO:0000305" key="4"/>
<evidence type="ECO:0000312" key="5">
    <source>
        <dbReference type="EMBL" id="EAY76526.1"/>
    </source>
</evidence>
<protein>
    <recommendedName>
        <fullName evidence="4">Coronatine-insensitive protein homolog 1a</fullName>
    </recommendedName>
</protein>
<dbReference type="EMBL" id="CM000126">
    <property type="protein sequence ID" value="EAY76526.1"/>
    <property type="molecule type" value="Genomic_DNA"/>
</dbReference>
<dbReference type="SMR" id="A2WX30"/>
<dbReference type="STRING" id="39946.A2WX30"/>
<dbReference type="EnsemblPlants" id="BGIOSGA004817-TA">
    <property type="protein sequence ID" value="BGIOSGA004817-PA"/>
    <property type="gene ID" value="BGIOSGA004817"/>
</dbReference>
<dbReference type="EnsemblPlants" id="OsGoSa_01g0039750.01">
    <property type="protein sequence ID" value="OsGoSa_01g0039750.01"/>
    <property type="gene ID" value="OsGoSa_01g0039750"/>
</dbReference>
<dbReference type="EnsemblPlants" id="OsGoSa_01g0039750.02">
    <property type="protein sequence ID" value="OsGoSa_01g0039750.02"/>
    <property type="gene ID" value="OsGoSa_01g0039750"/>
</dbReference>
<dbReference type="EnsemblPlants" id="OsIR64_01g0039210.01">
    <property type="protein sequence ID" value="OsIR64_01g0039210.01"/>
    <property type="gene ID" value="OsIR64_01g0039210"/>
</dbReference>
<dbReference type="EnsemblPlants" id="OsKYG_01g0039510.01">
    <property type="protein sequence ID" value="OsKYG_01g0039510.01"/>
    <property type="gene ID" value="OsKYG_01g0039510"/>
</dbReference>
<dbReference type="EnsemblPlants" id="OsLaMu_01g0039610.01">
    <property type="protein sequence ID" value="OsLaMu_01g0039610.01"/>
    <property type="gene ID" value="OsLaMu_01g0039610"/>
</dbReference>
<dbReference type="EnsemblPlants" id="OsLima_01g0039570.01">
    <property type="protein sequence ID" value="OsLima_01g0039570.01"/>
    <property type="gene ID" value="OsLima_01g0039570"/>
</dbReference>
<dbReference type="EnsemblPlants" id="OsLima_01g0039570.02">
    <property type="protein sequence ID" value="OsLima_01g0039570.02"/>
    <property type="gene ID" value="OsLima_01g0039570"/>
</dbReference>
<dbReference type="EnsemblPlants" id="OsLiXu_01g0039720.01">
    <property type="protein sequence ID" value="OsLiXu_01g0039720.01"/>
    <property type="gene ID" value="OsLiXu_01g0039720"/>
</dbReference>
<dbReference type="EnsemblPlants" id="OsLiXu_01g0039720.02">
    <property type="protein sequence ID" value="OsLiXu_01g0039720.02"/>
    <property type="gene ID" value="OsLiXu_01g0039720"/>
</dbReference>
<dbReference type="EnsemblPlants" id="OsMH63_01G040390_01">
    <property type="protein sequence ID" value="OsMH63_01G040390_01"/>
    <property type="gene ID" value="OsMH63_01G040390"/>
</dbReference>
<dbReference type="EnsemblPlants" id="OsMH63_01G040390_02">
    <property type="protein sequence ID" value="OsMH63_01G040390_02"/>
    <property type="gene ID" value="OsMH63_01G040390"/>
</dbReference>
<dbReference type="EnsemblPlants" id="OsPr106_01g0039530.01">
    <property type="protein sequence ID" value="OsPr106_01g0039530.01"/>
    <property type="gene ID" value="OsPr106_01g0039530"/>
</dbReference>
<dbReference type="EnsemblPlants" id="OsPr106_01g0039530.02">
    <property type="protein sequence ID" value="OsPr106_01g0039530.02"/>
    <property type="gene ID" value="OsPr106_01g0039530"/>
</dbReference>
<dbReference type="EnsemblPlants" id="OsZS97_01G039730_01">
    <property type="protein sequence ID" value="OsZS97_01G039730_01"/>
    <property type="gene ID" value="OsZS97_01G039730"/>
</dbReference>
<dbReference type="EnsemblPlants" id="OsZS97_01G039730_02">
    <property type="protein sequence ID" value="OsZS97_01G039730_02"/>
    <property type="gene ID" value="OsZS97_01G039730"/>
</dbReference>
<dbReference type="Gramene" id="BGIOSGA004817-TA">
    <property type="protein sequence ID" value="BGIOSGA004817-PA"/>
    <property type="gene ID" value="BGIOSGA004817"/>
</dbReference>
<dbReference type="Gramene" id="OsGoSa_01g0039750.01">
    <property type="protein sequence ID" value="OsGoSa_01g0039750.01"/>
    <property type="gene ID" value="OsGoSa_01g0039750"/>
</dbReference>
<dbReference type="Gramene" id="OsGoSa_01g0039750.02">
    <property type="protein sequence ID" value="OsGoSa_01g0039750.02"/>
    <property type="gene ID" value="OsGoSa_01g0039750"/>
</dbReference>
<dbReference type="Gramene" id="OsIR64_01g0039210.01">
    <property type="protein sequence ID" value="OsIR64_01g0039210.01"/>
    <property type="gene ID" value="OsIR64_01g0039210"/>
</dbReference>
<dbReference type="Gramene" id="OsKYG_01g0039510.01">
    <property type="protein sequence ID" value="OsKYG_01g0039510.01"/>
    <property type="gene ID" value="OsKYG_01g0039510"/>
</dbReference>
<dbReference type="Gramene" id="OsLaMu_01g0039610.01">
    <property type="protein sequence ID" value="OsLaMu_01g0039610.01"/>
    <property type="gene ID" value="OsLaMu_01g0039610"/>
</dbReference>
<dbReference type="Gramene" id="OsLima_01g0039570.01">
    <property type="protein sequence ID" value="OsLima_01g0039570.01"/>
    <property type="gene ID" value="OsLima_01g0039570"/>
</dbReference>
<dbReference type="Gramene" id="OsLima_01g0039570.02">
    <property type="protein sequence ID" value="OsLima_01g0039570.02"/>
    <property type="gene ID" value="OsLima_01g0039570"/>
</dbReference>
<dbReference type="Gramene" id="OsLiXu_01g0039720.01">
    <property type="protein sequence ID" value="OsLiXu_01g0039720.01"/>
    <property type="gene ID" value="OsLiXu_01g0039720"/>
</dbReference>
<dbReference type="Gramene" id="OsLiXu_01g0039720.02">
    <property type="protein sequence ID" value="OsLiXu_01g0039720.02"/>
    <property type="gene ID" value="OsLiXu_01g0039720"/>
</dbReference>
<dbReference type="Gramene" id="OsMH63_01G040390_01">
    <property type="protein sequence ID" value="OsMH63_01G040390_01"/>
    <property type="gene ID" value="OsMH63_01G040390"/>
</dbReference>
<dbReference type="Gramene" id="OsMH63_01G040390_02">
    <property type="protein sequence ID" value="OsMH63_01G040390_02"/>
    <property type="gene ID" value="OsMH63_01G040390"/>
</dbReference>
<dbReference type="Gramene" id="OsPr106_01g0039530.01">
    <property type="protein sequence ID" value="OsPr106_01g0039530.01"/>
    <property type="gene ID" value="OsPr106_01g0039530"/>
</dbReference>
<dbReference type="Gramene" id="OsPr106_01g0039530.02">
    <property type="protein sequence ID" value="OsPr106_01g0039530.02"/>
    <property type="gene ID" value="OsPr106_01g0039530"/>
</dbReference>
<dbReference type="Gramene" id="OsZS97_01G039730_01">
    <property type="protein sequence ID" value="OsZS97_01G039730_01"/>
    <property type="gene ID" value="OsZS97_01G039730"/>
</dbReference>
<dbReference type="Gramene" id="OsZS97_01G039730_02">
    <property type="protein sequence ID" value="OsZS97_01G039730_02"/>
    <property type="gene ID" value="OsZS97_01G039730"/>
</dbReference>
<dbReference type="HOGENOM" id="CLU_022456_2_0_1"/>
<dbReference type="OMA" id="CYTATPD"/>
<dbReference type="OrthoDB" id="550575at2759"/>
<dbReference type="Proteomes" id="UP000007015">
    <property type="component" value="Chromosome 1"/>
</dbReference>
<dbReference type="GO" id="GO:0019005">
    <property type="term" value="C:SCF ubiquitin ligase complex"/>
    <property type="evidence" value="ECO:0007669"/>
    <property type="project" value="TreeGrafter"/>
</dbReference>
<dbReference type="GO" id="GO:0002213">
    <property type="term" value="P:defense response to insect"/>
    <property type="evidence" value="ECO:0007669"/>
    <property type="project" value="EnsemblPlants"/>
</dbReference>
<dbReference type="GO" id="GO:2000022">
    <property type="term" value="P:regulation of jasmonic acid mediated signaling pathway"/>
    <property type="evidence" value="ECO:0007669"/>
    <property type="project" value="EnsemblPlants"/>
</dbReference>
<dbReference type="GO" id="GO:0031146">
    <property type="term" value="P:SCF-dependent proteasomal ubiquitin-dependent protein catabolic process"/>
    <property type="evidence" value="ECO:0007669"/>
    <property type="project" value="TreeGrafter"/>
</dbReference>
<dbReference type="CDD" id="cd22159">
    <property type="entry name" value="F-box_AtTIR1-like"/>
    <property type="match status" value="1"/>
</dbReference>
<dbReference type="FunFam" id="3.80.10.10:FF:000124">
    <property type="entry name" value="Coronatine-insensitive protein 1"/>
    <property type="match status" value="1"/>
</dbReference>
<dbReference type="FunFam" id="1.20.1280.50:FF:000034">
    <property type="entry name" value="Coronatine-insensitive protein homolog 2"/>
    <property type="match status" value="1"/>
</dbReference>
<dbReference type="Gene3D" id="1.20.1280.50">
    <property type="match status" value="1"/>
</dbReference>
<dbReference type="Gene3D" id="3.80.10.10">
    <property type="entry name" value="Ribonuclease Inhibitor"/>
    <property type="match status" value="1"/>
</dbReference>
<dbReference type="InterPro" id="IPR041567">
    <property type="entry name" value="COI1_F-box"/>
</dbReference>
<dbReference type="InterPro" id="IPR036047">
    <property type="entry name" value="F-box-like_dom_sf"/>
</dbReference>
<dbReference type="InterPro" id="IPR001611">
    <property type="entry name" value="Leu-rich_rpt"/>
</dbReference>
<dbReference type="InterPro" id="IPR006553">
    <property type="entry name" value="Leu-rich_rpt_Cys-con_subtyp"/>
</dbReference>
<dbReference type="InterPro" id="IPR032675">
    <property type="entry name" value="LRR_dom_sf"/>
</dbReference>
<dbReference type="InterPro" id="IPR041101">
    <property type="entry name" value="Transp_inhibit"/>
</dbReference>
<dbReference type="PANTHER" id="PTHR16134">
    <property type="entry name" value="F-BOX/TPR REPEAT PROTEIN POF3"/>
    <property type="match status" value="1"/>
</dbReference>
<dbReference type="PANTHER" id="PTHR16134:SF148">
    <property type="entry name" value="S-PHASE KINASE-ASSOCIATED PROTEIN 2, ISOFORM A"/>
    <property type="match status" value="1"/>
</dbReference>
<dbReference type="Pfam" id="PF18511">
    <property type="entry name" value="F-box_5"/>
    <property type="match status" value="1"/>
</dbReference>
<dbReference type="Pfam" id="PF13516">
    <property type="entry name" value="LRR_6"/>
    <property type="match status" value="1"/>
</dbReference>
<dbReference type="Pfam" id="PF18791">
    <property type="entry name" value="Transp_inhibit"/>
    <property type="match status" value="1"/>
</dbReference>
<dbReference type="SMART" id="SM00367">
    <property type="entry name" value="LRR_CC"/>
    <property type="match status" value="4"/>
</dbReference>
<dbReference type="SUPFAM" id="SSF81383">
    <property type="entry name" value="F-box domain"/>
    <property type="match status" value="1"/>
</dbReference>
<dbReference type="SUPFAM" id="SSF52047">
    <property type="entry name" value="RNI-like"/>
    <property type="match status" value="1"/>
</dbReference>